<proteinExistence type="evidence at transcript level"/>
<evidence type="ECO:0000250" key="1"/>
<evidence type="ECO:0000269" key="2">
    <source>
    </source>
</evidence>
<evidence type="ECO:0000305" key="3"/>
<gene>
    <name type="primary">TPS01</name>
    <name type="synonym">TC1</name>
    <name type="synonym">TS1</name>
    <name type="ordered locus">At4g15870</name>
    <name type="ORF">dl3975c</name>
    <name type="ORF">FCAALL.405</name>
</gene>
<protein>
    <recommendedName>
        <fullName>Terpenoid synthase 1</fullName>
        <shortName>AtTPS01</shortName>
        <ecNumber>4.2.3.-</ecNumber>
    </recommendedName>
</protein>
<accession>O23651</accession>
<accession>O22680</accession>
<accession>O23437</accession>
<accession>O23438</accession>
<comment type="cofactor">
    <cofactor evidence="1">
        <name>Mg(2+)</name>
        <dbReference type="ChEBI" id="CHEBI:18420"/>
    </cofactor>
    <cofactor evidence="1">
        <name>Mn(2+)</name>
        <dbReference type="ChEBI" id="CHEBI:29035"/>
    </cofactor>
    <text evidence="1">Binds 3 Mg(2+) or Mn(2+) ions per subunit.</text>
</comment>
<comment type="pathway">
    <text>Secondary metabolite biosynthesis; terpenoid biosynthesis.</text>
</comment>
<comment type="subcellular location">
    <subcellularLocation>
        <location evidence="3">Cytoplasm</location>
    </subcellularLocation>
</comment>
<comment type="tissue specificity">
    <text evidence="2">Expressed exclusively in siliques.</text>
</comment>
<comment type="domain">
    <text>The Asp-Asp-Xaa-Xaa-Asp/Glu (DDXXD/E) motif is important for the catalytic activity, presumably through binding to Mg(2+).</text>
</comment>
<comment type="similarity">
    <text evidence="3">Belongs to the terpene synthase family. Tpsa subfamily.</text>
</comment>
<comment type="sequence caution" evidence="3">
    <conflict type="erroneous gene model prediction">
        <sequence resource="EMBL-CDS" id="CAA72070"/>
    </conflict>
</comment>
<comment type="sequence caution" evidence="3">
    <conflict type="erroneous gene model prediction">
        <sequence resource="EMBL-CDS" id="CAB10366"/>
    </conflict>
</comment>
<comment type="sequence caution" evidence="3">
    <conflict type="erroneous gene model prediction">
        <sequence resource="EMBL-CDS" id="CAB78629"/>
    </conflict>
</comment>
<reference key="1">
    <citation type="journal article" date="1997" name="Gene">
        <title>Structure, organization and putative function of the genes identified within a 23.9 kb fragment from Arabidopsis thaliana chromosome IV sequenced in the framework of the ESSA programme.</title>
        <authorList>
            <person name="Aubourg S."/>
            <person name="Takvorian A."/>
            <person name="Cheron A."/>
            <person name="Kreis M."/>
            <person name="Lecharny A."/>
        </authorList>
    </citation>
    <scope>NUCLEOTIDE SEQUENCE [GENOMIC DNA / MRNA]</scope>
</reference>
<reference key="2">
    <citation type="journal article" date="1998" name="Nature">
        <title>Analysis of 1.9 Mb of contiguous sequence from chromosome 4 of Arabidopsis thaliana.</title>
        <authorList>
            <person name="Bevan M."/>
            <person name="Bancroft I."/>
            <person name="Bent E."/>
            <person name="Love K."/>
            <person name="Goodman H.M."/>
            <person name="Dean C."/>
            <person name="Bergkamp R."/>
            <person name="Dirkse W."/>
            <person name="van Staveren M."/>
            <person name="Stiekema W."/>
            <person name="Drost L."/>
            <person name="Ridley P."/>
            <person name="Hudson S.-A."/>
            <person name="Patel K."/>
            <person name="Murphy G."/>
            <person name="Piffanelli P."/>
            <person name="Wedler H."/>
            <person name="Wedler E."/>
            <person name="Wambutt R."/>
            <person name="Weitzenegger T."/>
            <person name="Pohl T."/>
            <person name="Terryn N."/>
            <person name="Gielen J."/>
            <person name="Villarroel R."/>
            <person name="De Clercq R."/>
            <person name="van Montagu M."/>
            <person name="Lecharny A."/>
            <person name="Aubourg S."/>
            <person name="Gy I."/>
            <person name="Kreis M."/>
            <person name="Lao N."/>
            <person name="Kavanagh T."/>
            <person name="Hempel S."/>
            <person name="Kotter P."/>
            <person name="Entian K.-D."/>
            <person name="Rieger M."/>
            <person name="Schaefer M."/>
            <person name="Funk B."/>
            <person name="Mueller-Auer S."/>
            <person name="Silvey M."/>
            <person name="James R."/>
            <person name="Monfort A."/>
            <person name="Pons A."/>
            <person name="Puigdomenech P."/>
            <person name="Douka A."/>
            <person name="Voukelatou E."/>
            <person name="Milioni D."/>
            <person name="Hatzopoulos P."/>
            <person name="Piravandi E."/>
            <person name="Obermaier B."/>
            <person name="Hilbert H."/>
            <person name="Duesterhoeft A."/>
            <person name="Moores T."/>
            <person name="Jones J.D.G."/>
            <person name="Eneva T."/>
            <person name="Palme K."/>
            <person name="Benes V."/>
            <person name="Rechmann S."/>
            <person name="Ansorge W."/>
            <person name="Cooke R."/>
            <person name="Berger C."/>
            <person name="Delseny M."/>
            <person name="Voet M."/>
            <person name="Volckaert G."/>
            <person name="Mewes H.-W."/>
            <person name="Klosterman S."/>
            <person name="Schueller C."/>
            <person name="Chalwatzis N."/>
        </authorList>
    </citation>
    <scope>NUCLEOTIDE SEQUENCE [LARGE SCALE GENOMIC DNA]</scope>
    <source>
        <strain>cv. Columbia</strain>
    </source>
</reference>
<reference key="3">
    <citation type="journal article" date="1999" name="Nature">
        <title>Sequence and analysis of chromosome 4 of the plant Arabidopsis thaliana.</title>
        <authorList>
            <person name="Mayer K.F.X."/>
            <person name="Schueller C."/>
            <person name="Wambutt R."/>
            <person name="Murphy G."/>
            <person name="Volckaert G."/>
            <person name="Pohl T."/>
            <person name="Duesterhoeft A."/>
            <person name="Stiekema W."/>
            <person name="Entian K.-D."/>
            <person name="Terryn N."/>
            <person name="Harris B."/>
            <person name="Ansorge W."/>
            <person name="Brandt P."/>
            <person name="Grivell L.A."/>
            <person name="Rieger M."/>
            <person name="Weichselgartner M."/>
            <person name="de Simone V."/>
            <person name="Obermaier B."/>
            <person name="Mache R."/>
            <person name="Mueller M."/>
            <person name="Kreis M."/>
            <person name="Delseny M."/>
            <person name="Puigdomenech P."/>
            <person name="Watson M."/>
            <person name="Schmidtheini T."/>
            <person name="Reichert B."/>
            <person name="Portetelle D."/>
            <person name="Perez-Alonso M."/>
            <person name="Boutry M."/>
            <person name="Bancroft I."/>
            <person name="Vos P."/>
            <person name="Hoheisel J."/>
            <person name="Zimmermann W."/>
            <person name="Wedler H."/>
            <person name="Ridley P."/>
            <person name="Langham S.-A."/>
            <person name="McCullagh B."/>
            <person name="Bilham L."/>
            <person name="Robben J."/>
            <person name="van der Schueren J."/>
            <person name="Grymonprez B."/>
            <person name="Chuang Y.-J."/>
            <person name="Vandenbussche F."/>
            <person name="Braeken M."/>
            <person name="Weltjens I."/>
            <person name="Voet M."/>
            <person name="Bastiaens I."/>
            <person name="Aert R."/>
            <person name="Defoor E."/>
            <person name="Weitzenegger T."/>
            <person name="Bothe G."/>
            <person name="Ramsperger U."/>
            <person name="Hilbert H."/>
            <person name="Braun M."/>
            <person name="Holzer E."/>
            <person name="Brandt A."/>
            <person name="Peters S."/>
            <person name="van Staveren M."/>
            <person name="Dirkse W."/>
            <person name="Mooijman P."/>
            <person name="Klein Lankhorst R."/>
            <person name="Rose M."/>
            <person name="Hauf J."/>
            <person name="Koetter P."/>
            <person name="Berneiser S."/>
            <person name="Hempel S."/>
            <person name="Feldpausch M."/>
            <person name="Lamberth S."/>
            <person name="Van den Daele H."/>
            <person name="De Keyser A."/>
            <person name="Buysshaert C."/>
            <person name="Gielen J."/>
            <person name="Villarroel R."/>
            <person name="De Clercq R."/>
            <person name="van Montagu M."/>
            <person name="Rogers J."/>
            <person name="Cronin A."/>
            <person name="Quail M.A."/>
            <person name="Bray-Allen S."/>
            <person name="Clark L."/>
            <person name="Doggett J."/>
            <person name="Hall S."/>
            <person name="Kay M."/>
            <person name="Lennard N."/>
            <person name="McLay K."/>
            <person name="Mayes R."/>
            <person name="Pettett A."/>
            <person name="Rajandream M.A."/>
            <person name="Lyne M."/>
            <person name="Benes V."/>
            <person name="Rechmann S."/>
            <person name="Borkova D."/>
            <person name="Bloecker H."/>
            <person name="Scharfe M."/>
            <person name="Grimm M."/>
            <person name="Loehnert T.-H."/>
            <person name="Dose S."/>
            <person name="de Haan M."/>
            <person name="Maarse A.C."/>
            <person name="Schaefer M."/>
            <person name="Mueller-Auer S."/>
            <person name="Gabel C."/>
            <person name="Fuchs M."/>
            <person name="Fartmann B."/>
            <person name="Granderath K."/>
            <person name="Dauner D."/>
            <person name="Herzl A."/>
            <person name="Neumann S."/>
            <person name="Argiriou A."/>
            <person name="Vitale D."/>
            <person name="Liguori R."/>
            <person name="Piravandi E."/>
            <person name="Massenet O."/>
            <person name="Quigley F."/>
            <person name="Clabauld G."/>
            <person name="Muendlein A."/>
            <person name="Felber R."/>
            <person name="Schnabl S."/>
            <person name="Hiller R."/>
            <person name="Schmidt W."/>
            <person name="Lecharny A."/>
            <person name="Aubourg S."/>
            <person name="Chefdor F."/>
            <person name="Cooke R."/>
            <person name="Berger C."/>
            <person name="Monfort A."/>
            <person name="Casacuberta E."/>
            <person name="Gibbons T."/>
            <person name="Weber N."/>
            <person name="Vandenbol M."/>
            <person name="Bargues M."/>
            <person name="Terol J."/>
            <person name="Torres A."/>
            <person name="Perez-Perez A."/>
            <person name="Purnelle B."/>
            <person name="Bent E."/>
            <person name="Johnson S."/>
            <person name="Tacon D."/>
            <person name="Jesse T."/>
            <person name="Heijnen L."/>
            <person name="Schwarz S."/>
            <person name="Scholler P."/>
            <person name="Heber S."/>
            <person name="Francs P."/>
            <person name="Bielke C."/>
            <person name="Frishman D."/>
            <person name="Haase D."/>
            <person name="Lemcke K."/>
            <person name="Mewes H.-W."/>
            <person name="Stocker S."/>
            <person name="Zaccaria P."/>
            <person name="Bevan M."/>
            <person name="Wilson R.K."/>
            <person name="de la Bastide M."/>
            <person name="Habermann K."/>
            <person name="Parnell L."/>
            <person name="Dedhia N."/>
            <person name="Gnoj L."/>
            <person name="Schutz K."/>
            <person name="Huang E."/>
            <person name="Spiegel L."/>
            <person name="Sekhon M."/>
            <person name="Murray J."/>
            <person name="Sheet P."/>
            <person name="Cordes M."/>
            <person name="Abu-Threideh J."/>
            <person name="Stoneking T."/>
            <person name="Kalicki J."/>
            <person name="Graves T."/>
            <person name="Harmon G."/>
            <person name="Edwards J."/>
            <person name="Latreille P."/>
            <person name="Courtney L."/>
            <person name="Cloud J."/>
            <person name="Abbott A."/>
            <person name="Scott K."/>
            <person name="Johnson D."/>
            <person name="Minx P."/>
            <person name="Bentley D."/>
            <person name="Fulton B."/>
            <person name="Miller N."/>
            <person name="Greco T."/>
            <person name="Kemp K."/>
            <person name="Kramer J."/>
            <person name="Fulton L."/>
            <person name="Mardis E."/>
            <person name="Dante M."/>
            <person name="Pepin K."/>
            <person name="Hillier L.W."/>
            <person name="Nelson J."/>
            <person name="Spieth J."/>
            <person name="Ryan E."/>
            <person name="Andrews S."/>
            <person name="Geisel C."/>
            <person name="Layman D."/>
            <person name="Du H."/>
            <person name="Ali J."/>
            <person name="Berghoff A."/>
            <person name="Jones K."/>
            <person name="Drone K."/>
            <person name="Cotton M."/>
            <person name="Joshu C."/>
            <person name="Antonoiu B."/>
            <person name="Zidanic M."/>
            <person name="Strong C."/>
            <person name="Sun H."/>
            <person name="Lamar B."/>
            <person name="Yordan C."/>
            <person name="Ma P."/>
            <person name="Zhong J."/>
            <person name="Preston R."/>
            <person name="Vil D."/>
            <person name="Shekher M."/>
            <person name="Matero A."/>
            <person name="Shah R."/>
            <person name="Swaby I.K."/>
            <person name="O'Shaughnessy A."/>
            <person name="Rodriguez M."/>
            <person name="Hoffman J."/>
            <person name="Till S."/>
            <person name="Granat S."/>
            <person name="Shohdy N."/>
            <person name="Hasegawa A."/>
            <person name="Hameed A."/>
            <person name="Lodhi M."/>
            <person name="Johnson A."/>
            <person name="Chen E."/>
            <person name="Marra M.A."/>
            <person name="Martienssen R."/>
            <person name="McCombie W.R."/>
        </authorList>
    </citation>
    <scope>NUCLEOTIDE SEQUENCE [LARGE SCALE GENOMIC DNA]</scope>
    <source>
        <strain>cv. Columbia</strain>
    </source>
</reference>
<reference key="4">
    <citation type="journal article" date="2017" name="Plant J.">
        <title>Araport11: a complete reannotation of the Arabidopsis thaliana reference genome.</title>
        <authorList>
            <person name="Cheng C.Y."/>
            <person name="Krishnakumar V."/>
            <person name="Chan A.P."/>
            <person name="Thibaud-Nissen F."/>
            <person name="Schobel S."/>
            <person name="Town C.D."/>
        </authorList>
    </citation>
    <scope>GENOME REANNOTATION</scope>
    <source>
        <strain>cv. Columbia</strain>
    </source>
</reference>
<reference key="5">
    <citation type="journal article" date="2002" name="Mol. Genet. Genomics">
        <title>Genomic analysis of the terpenoid synthase (AtTPS) gene family of Arabidopsis thaliana.</title>
        <authorList>
            <person name="Aubourg S."/>
            <person name="Lecharny A."/>
            <person name="Bohlmann J."/>
        </authorList>
    </citation>
    <scope>GENE FAMILY</scope>
    <scope>NOMENCLATURE</scope>
</reference>
<reference key="6">
    <citation type="journal article" date="2003" name="Plant Cell">
        <title>Biosynthesis and emission of terpenoid volatiles from Arabidopsis flowers.</title>
        <authorList>
            <person name="Chen F."/>
            <person name="Tholl D."/>
            <person name="D'Auria J.C."/>
            <person name="Farooq A."/>
            <person name="Pichersky E."/>
            <person name="Gershenzon J."/>
        </authorList>
    </citation>
    <scope>TISSUE SPECIFICITY</scope>
</reference>
<reference key="7">
    <citation type="journal article" date="2003" name="Plant Mol. Biol.">
        <title>Genome organization in Arabidopsis thaliana: a survey for genes involved in isoprenoid and chlorophyll metabolism.</title>
        <authorList>
            <person name="Lange B.M."/>
            <person name="Ghassemian M."/>
        </authorList>
    </citation>
    <scope>GENE FAMILY</scope>
</reference>
<sequence length="598" mass="69620">MYSISLVVNMQCISAYGSILSLPLRSNLFSVRKLSSFPHKSFSGQHGKLVRMKATPTRACHDQESNRKFKRLPLSKWGHHFLSAQVDVSEMNALAQEIERLKPEVGEMLMFSSKSIESTKKRILFIYMLVSLGVAFHFEDEIEQSLEEGFEKIQEMIAGEDDLYTISIMFWVFRTYGYNMSTDVFKRFKGENEKFMESITSDVKGMVSLYEAAHLRTTREDILEEALSFTTRNLESLARAGASSPHILMRIRNALCMPQHYNAEMIFAREYISFYEQEEDHNKMLLRFAKINFKFLQLNWIQELKTLTKWWKQQDLASKLPPYFRDRLIECYLFAIMIYFEPQFSLGRVSLAKINTVFTLVDDTCDRYGNVSEVAALVQCVERWDPDCMDSLPDYMKTVFKFAWNTFEECENAGIMEEGLSYDVQGALEEWEQGDVVPTFDEYLEIGGVEVTMYVSIACSFLGLGQSSREQAYKWLKSRPKFVEAQAKRARLMNDIAGFEGDMSRGFDVNAIMYYMKQYKVTEEETFTRLQKMARDLDTTVNEEILKTTKSVPRQILKRAIDFGKMIEFTYRSGEEYTHPEGRFKDHITSLFVDLIRL</sequence>
<keyword id="KW-0963">Cytoplasm</keyword>
<keyword id="KW-0456">Lyase</keyword>
<keyword id="KW-0460">Magnesium</keyword>
<keyword id="KW-0464">Manganese</keyword>
<keyword id="KW-0479">Metal-binding</keyword>
<keyword id="KW-1185">Reference proteome</keyword>
<dbReference type="EC" id="4.2.3.-"/>
<dbReference type="EMBL" id="Y11187">
    <property type="protein sequence ID" value="CAA72070.1"/>
    <property type="status" value="ALT_SEQ"/>
    <property type="molecule type" value="Genomic_DNA"/>
</dbReference>
<dbReference type="EMBL" id="Y11188">
    <property type="protein sequence ID" value="CAA72074.1"/>
    <property type="molecule type" value="mRNA"/>
</dbReference>
<dbReference type="EMBL" id="Z97339">
    <property type="protein sequence ID" value="CAB10366.1"/>
    <property type="status" value="ALT_SEQ"/>
    <property type="molecule type" value="Genomic_DNA"/>
</dbReference>
<dbReference type="EMBL" id="AL161542">
    <property type="protein sequence ID" value="CAB78629.1"/>
    <property type="status" value="ALT_SEQ"/>
    <property type="molecule type" value="Genomic_DNA"/>
</dbReference>
<dbReference type="EMBL" id="CP002687">
    <property type="protein sequence ID" value="AEE83660.1"/>
    <property type="molecule type" value="Genomic_DNA"/>
</dbReference>
<dbReference type="PIR" id="C71424">
    <property type="entry name" value="C71424"/>
</dbReference>
<dbReference type="RefSeq" id="NP_193322.2">
    <property type="nucleotide sequence ID" value="NM_117679.2"/>
</dbReference>
<dbReference type="SMR" id="O23651"/>
<dbReference type="FunCoup" id="O23651">
    <property type="interactions" value="22"/>
</dbReference>
<dbReference type="STRING" id="3702.O23651"/>
<dbReference type="PaxDb" id="3702-AT4G15870.1"/>
<dbReference type="ProteomicsDB" id="228374"/>
<dbReference type="EnsemblPlants" id="AT4G15870.1">
    <property type="protein sequence ID" value="AT4G15870.1"/>
    <property type="gene ID" value="AT4G15870"/>
</dbReference>
<dbReference type="GeneID" id="827268"/>
<dbReference type="Gramene" id="AT4G15870.1">
    <property type="protein sequence ID" value="AT4G15870.1"/>
    <property type="gene ID" value="AT4G15870"/>
</dbReference>
<dbReference type="KEGG" id="ath:AT4G15870"/>
<dbReference type="Araport" id="AT4G15870"/>
<dbReference type="TAIR" id="AT4G15870">
    <property type="gene designation" value="TS1"/>
</dbReference>
<dbReference type="eggNOG" id="ENOG502QUCN">
    <property type="taxonomic scope" value="Eukaryota"/>
</dbReference>
<dbReference type="HOGENOM" id="CLU_003125_7_2_1"/>
<dbReference type="InParanoid" id="O23651"/>
<dbReference type="OMA" id="TVFKFAW"/>
<dbReference type="PhylomeDB" id="O23651"/>
<dbReference type="BioCyc" id="ARA:AT4G15870-MONOMER"/>
<dbReference type="UniPathway" id="UPA00213"/>
<dbReference type="PRO" id="PR:O23651"/>
<dbReference type="Proteomes" id="UP000006548">
    <property type="component" value="Chromosome 4"/>
</dbReference>
<dbReference type="ExpressionAtlas" id="O23651">
    <property type="expression patterns" value="baseline and differential"/>
</dbReference>
<dbReference type="GO" id="GO:0005737">
    <property type="term" value="C:cytoplasm"/>
    <property type="evidence" value="ECO:0007669"/>
    <property type="project" value="UniProtKB-SubCell"/>
</dbReference>
<dbReference type="GO" id="GO:0000287">
    <property type="term" value="F:magnesium ion binding"/>
    <property type="evidence" value="ECO:0007669"/>
    <property type="project" value="InterPro"/>
</dbReference>
<dbReference type="GO" id="GO:0010333">
    <property type="term" value="F:terpene synthase activity"/>
    <property type="evidence" value="ECO:0007669"/>
    <property type="project" value="InterPro"/>
</dbReference>
<dbReference type="GO" id="GO:0016102">
    <property type="term" value="P:diterpenoid biosynthetic process"/>
    <property type="evidence" value="ECO:0007669"/>
    <property type="project" value="InterPro"/>
</dbReference>
<dbReference type="GO" id="GO:0046246">
    <property type="term" value="P:terpene biosynthetic process"/>
    <property type="evidence" value="ECO:0000250"/>
    <property type="project" value="TAIR"/>
</dbReference>
<dbReference type="CDD" id="cd00684">
    <property type="entry name" value="Terpene_cyclase_plant_C1"/>
    <property type="match status" value="1"/>
</dbReference>
<dbReference type="FunFam" id="1.10.600.10:FF:000007">
    <property type="entry name" value="Isoprene synthase, chloroplastic"/>
    <property type="match status" value="1"/>
</dbReference>
<dbReference type="FunFam" id="1.50.10.130:FF:000001">
    <property type="entry name" value="Isoprene synthase, chloroplastic"/>
    <property type="match status" value="1"/>
</dbReference>
<dbReference type="Gene3D" id="1.10.600.10">
    <property type="entry name" value="Farnesyl Diphosphate Synthase"/>
    <property type="match status" value="1"/>
</dbReference>
<dbReference type="Gene3D" id="1.50.10.130">
    <property type="entry name" value="Terpene synthase, N-terminal domain"/>
    <property type="match status" value="1"/>
</dbReference>
<dbReference type="InterPro" id="IPR008949">
    <property type="entry name" value="Isoprenoid_synthase_dom_sf"/>
</dbReference>
<dbReference type="InterPro" id="IPR034741">
    <property type="entry name" value="Terpene_cyclase-like_1_C"/>
</dbReference>
<dbReference type="InterPro" id="IPR044814">
    <property type="entry name" value="Terpene_cyclase_plant_C1"/>
</dbReference>
<dbReference type="InterPro" id="IPR001906">
    <property type="entry name" value="Terpene_synth_N"/>
</dbReference>
<dbReference type="InterPro" id="IPR036965">
    <property type="entry name" value="Terpene_synth_N_sf"/>
</dbReference>
<dbReference type="InterPro" id="IPR050148">
    <property type="entry name" value="Terpene_synthase-like"/>
</dbReference>
<dbReference type="InterPro" id="IPR005630">
    <property type="entry name" value="Terpene_synthase_metal-bd"/>
</dbReference>
<dbReference type="InterPro" id="IPR008930">
    <property type="entry name" value="Terpenoid_cyclase/PrenylTrfase"/>
</dbReference>
<dbReference type="PANTHER" id="PTHR31225">
    <property type="entry name" value="OS04G0344100 PROTEIN-RELATED"/>
    <property type="match status" value="1"/>
</dbReference>
<dbReference type="PANTHER" id="PTHR31225:SF242">
    <property type="entry name" value="TERPENOID SYNTHASE 9"/>
    <property type="match status" value="1"/>
</dbReference>
<dbReference type="Pfam" id="PF01397">
    <property type="entry name" value="Terpene_synth"/>
    <property type="match status" value="1"/>
</dbReference>
<dbReference type="Pfam" id="PF03936">
    <property type="entry name" value="Terpene_synth_C"/>
    <property type="match status" value="1"/>
</dbReference>
<dbReference type="SFLD" id="SFLDS00005">
    <property type="entry name" value="Isoprenoid_Synthase_Type_I"/>
    <property type="match status" value="1"/>
</dbReference>
<dbReference type="SFLD" id="SFLDG01019">
    <property type="entry name" value="Terpene_Cyclase_Like_1_C_Termi"/>
    <property type="match status" value="1"/>
</dbReference>
<dbReference type="SUPFAM" id="SSF48239">
    <property type="entry name" value="Terpenoid cyclases/Protein prenyltransferases"/>
    <property type="match status" value="1"/>
</dbReference>
<dbReference type="SUPFAM" id="SSF48576">
    <property type="entry name" value="Terpenoid synthases"/>
    <property type="match status" value="1"/>
</dbReference>
<name>TPS01_ARATH</name>
<organism>
    <name type="scientific">Arabidopsis thaliana</name>
    <name type="common">Mouse-ear cress</name>
    <dbReference type="NCBI Taxonomy" id="3702"/>
    <lineage>
        <taxon>Eukaryota</taxon>
        <taxon>Viridiplantae</taxon>
        <taxon>Streptophyta</taxon>
        <taxon>Embryophyta</taxon>
        <taxon>Tracheophyta</taxon>
        <taxon>Spermatophyta</taxon>
        <taxon>Magnoliopsida</taxon>
        <taxon>eudicotyledons</taxon>
        <taxon>Gunneridae</taxon>
        <taxon>Pentapetalae</taxon>
        <taxon>rosids</taxon>
        <taxon>malvids</taxon>
        <taxon>Brassicales</taxon>
        <taxon>Brassicaceae</taxon>
        <taxon>Camelineae</taxon>
        <taxon>Arabidopsis</taxon>
    </lineage>
</organism>
<feature type="chain" id="PRO_0000403698" description="Terpenoid synthase 1">
    <location>
        <begin position="1"/>
        <end position="598"/>
    </location>
</feature>
<feature type="short sequence motif" description="DDXXD motif">
    <location>
        <begin position="362"/>
        <end position="366"/>
    </location>
</feature>
<feature type="binding site" evidence="1">
    <location>
        <position position="362"/>
    </location>
    <ligand>
        <name>Mg(2+)</name>
        <dbReference type="ChEBI" id="CHEBI:18420"/>
        <label>1</label>
    </ligand>
</feature>
<feature type="binding site" evidence="1">
    <location>
        <position position="362"/>
    </location>
    <ligand>
        <name>Mg(2+)</name>
        <dbReference type="ChEBI" id="CHEBI:18420"/>
        <label>2</label>
    </ligand>
</feature>
<feature type="binding site" evidence="1">
    <location>
        <position position="366"/>
    </location>
    <ligand>
        <name>Mg(2+)</name>
        <dbReference type="ChEBI" id="CHEBI:18420"/>
        <label>1</label>
    </ligand>
</feature>
<feature type="binding site" evidence="1">
    <location>
        <position position="366"/>
    </location>
    <ligand>
        <name>Mg(2+)</name>
        <dbReference type="ChEBI" id="CHEBI:18420"/>
        <label>2</label>
    </ligand>
</feature>
<feature type="binding site" evidence="1">
    <location>
        <position position="494"/>
    </location>
    <ligand>
        <name>Mg(2+)</name>
        <dbReference type="ChEBI" id="CHEBI:18420"/>
        <label>3</label>
    </ligand>
</feature>
<feature type="binding site" evidence="1">
    <location>
        <position position="502"/>
    </location>
    <ligand>
        <name>Mg(2+)</name>
        <dbReference type="ChEBI" id="CHEBI:18420"/>
        <label>3</label>
    </ligand>
</feature>